<reference key="1">
    <citation type="journal article" date="1993" name="FEBS Lett.">
        <title>Rainbow trout ovarian cholesterol side-chain cleavage cytochrome P450 (P450scc). cDNA cloning and mRNA expression during oogenesis.</title>
        <authorList>
            <person name="Takahashi M."/>
            <person name="Tanaka M."/>
            <person name="Sakai N."/>
            <person name="Adachi S."/>
            <person name="Miller W.L."/>
            <person name="Nagahama Y."/>
        </authorList>
    </citation>
    <scope>NUCLEOTIDE SEQUENCE [MRNA]</scope>
    <scope>TISSUE SPECIFICITY</scope>
    <source>
        <tissue>Ovary</tissue>
    </source>
</reference>
<feature type="transit peptide" description="Mitochondrion" evidence="1">
    <location>
        <begin position="1"/>
        <end position="39"/>
    </location>
</feature>
<feature type="chain" id="PRO_0000003593" description="Cholesterol side-chain cleavage enzyme, mitochondrial">
    <location>
        <begin position="40"/>
        <end position="514"/>
    </location>
</feature>
<feature type="binding site" description="axial binding residue" evidence="2">
    <location>
        <position position="458"/>
    </location>
    <ligand>
        <name>heme</name>
        <dbReference type="ChEBI" id="CHEBI:30413"/>
    </ligand>
    <ligandPart>
        <name>Fe</name>
        <dbReference type="ChEBI" id="CHEBI:18248"/>
    </ligandPart>
</feature>
<organism>
    <name type="scientific">Oncorhynchus mykiss</name>
    <name type="common">Rainbow trout</name>
    <name type="synonym">Salmo gairdneri</name>
    <dbReference type="NCBI Taxonomy" id="8022"/>
    <lineage>
        <taxon>Eukaryota</taxon>
        <taxon>Metazoa</taxon>
        <taxon>Chordata</taxon>
        <taxon>Craniata</taxon>
        <taxon>Vertebrata</taxon>
        <taxon>Euteleostomi</taxon>
        <taxon>Actinopterygii</taxon>
        <taxon>Neopterygii</taxon>
        <taxon>Teleostei</taxon>
        <taxon>Protacanthopterygii</taxon>
        <taxon>Salmoniformes</taxon>
        <taxon>Salmonidae</taxon>
        <taxon>Salmoninae</taxon>
        <taxon>Oncorhynchus</taxon>
    </lineage>
</organism>
<accession>Q07217</accession>
<keyword id="KW-0153">Cholesterol metabolism</keyword>
<keyword id="KW-0349">Heme</keyword>
<keyword id="KW-0408">Iron</keyword>
<keyword id="KW-0443">Lipid metabolism</keyword>
<keyword id="KW-0472">Membrane</keyword>
<keyword id="KW-0479">Metal-binding</keyword>
<keyword id="KW-0496">Mitochondrion</keyword>
<keyword id="KW-0999">Mitochondrion inner membrane</keyword>
<keyword id="KW-0503">Monooxygenase</keyword>
<keyword id="KW-0560">Oxidoreductase</keyword>
<keyword id="KW-0753">Steroid metabolism</keyword>
<keyword id="KW-0755">Steroidogenesis</keyword>
<keyword id="KW-1207">Sterol metabolism</keyword>
<keyword id="KW-0809">Transit peptide</keyword>
<gene>
    <name type="primary">cyp11a1</name>
</gene>
<proteinExistence type="evidence at transcript level"/>
<protein>
    <recommendedName>
        <fullName>Cholesterol side-chain cleavage enzyme, mitochondrial</fullName>
        <ecNumber>1.14.15.6</ecNumber>
    </recommendedName>
    <alternativeName>
        <fullName>CYPXIA1</fullName>
    </alternativeName>
    <alternativeName>
        <fullName>Cholesterol desmolase</fullName>
    </alternativeName>
    <alternativeName>
        <fullName>Cytochrome P450 11A1</fullName>
    </alternativeName>
    <alternativeName>
        <fullName>Cytochrome P450(scc)</fullName>
    </alternativeName>
</protein>
<dbReference type="EC" id="1.14.15.6"/>
<dbReference type="EMBL" id="S57305">
    <property type="protein sequence ID" value="AAB25804.1"/>
    <property type="molecule type" value="mRNA"/>
</dbReference>
<dbReference type="PIR" id="S32197">
    <property type="entry name" value="S32197"/>
</dbReference>
<dbReference type="SMR" id="Q07217"/>
<dbReference type="UniPathway" id="UPA00229"/>
<dbReference type="Proteomes" id="UP000694395">
    <property type="component" value="Unplaced"/>
</dbReference>
<dbReference type="GO" id="GO:0005743">
    <property type="term" value="C:mitochondrial inner membrane"/>
    <property type="evidence" value="ECO:0000250"/>
    <property type="project" value="UniProtKB"/>
</dbReference>
<dbReference type="GO" id="GO:0008386">
    <property type="term" value="F:cholesterol monooxygenase (side-chain-cleaving) activity"/>
    <property type="evidence" value="ECO:0007669"/>
    <property type="project" value="UniProtKB-EC"/>
</dbReference>
<dbReference type="GO" id="GO:0020037">
    <property type="term" value="F:heme binding"/>
    <property type="evidence" value="ECO:0007669"/>
    <property type="project" value="InterPro"/>
</dbReference>
<dbReference type="GO" id="GO:0005506">
    <property type="term" value="F:iron ion binding"/>
    <property type="evidence" value="ECO:0007669"/>
    <property type="project" value="InterPro"/>
</dbReference>
<dbReference type="GO" id="GO:0006700">
    <property type="term" value="P:C21-steroid hormone biosynthetic process"/>
    <property type="evidence" value="ECO:0007669"/>
    <property type="project" value="TreeGrafter"/>
</dbReference>
<dbReference type="GO" id="GO:0071375">
    <property type="term" value="P:cellular response to peptide hormone stimulus"/>
    <property type="evidence" value="ECO:0007669"/>
    <property type="project" value="TreeGrafter"/>
</dbReference>
<dbReference type="GO" id="GO:0008203">
    <property type="term" value="P:cholesterol metabolic process"/>
    <property type="evidence" value="ECO:0007669"/>
    <property type="project" value="UniProtKB-KW"/>
</dbReference>
<dbReference type="GO" id="GO:0034650">
    <property type="term" value="P:cortisol metabolic process"/>
    <property type="evidence" value="ECO:0007669"/>
    <property type="project" value="TreeGrafter"/>
</dbReference>
<dbReference type="GO" id="GO:0006704">
    <property type="term" value="P:glucocorticoid biosynthetic process"/>
    <property type="evidence" value="ECO:0007669"/>
    <property type="project" value="TreeGrafter"/>
</dbReference>
<dbReference type="CDD" id="cd20643">
    <property type="entry name" value="CYP11A1"/>
    <property type="match status" value="1"/>
</dbReference>
<dbReference type="FunFam" id="1.10.630.10:FF:000015">
    <property type="entry name" value="Cholesterol side-chain cleavage enzyme, mitochondrial"/>
    <property type="match status" value="1"/>
</dbReference>
<dbReference type="Gene3D" id="1.10.630.10">
    <property type="entry name" value="Cytochrome P450"/>
    <property type="match status" value="1"/>
</dbReference>
<dbReference type="InterPro" id="IPR050479">
    <property type="entry name" value="CYP11_CYP27_families"/>
</dbReference>
<dbReference type="InterPro" id="IPR001128">
    <property type="entry name" value="Cyt_P450"/>
</dbReference>
<dbReference type="InterPro" id="IPR017972">
    <property type="entry name" value="Cyt_P450_CS"/>
</dbReference>
<dbReference type="InterPro" id="IPR002401">
    <property type="entry name" value="Cyt_P450_E_grp-I"/>
</dbReference>
<dbReference type="InterPro" id="IPR036396">
    <property type="entry name" value="Cyt_P450_sf"/>
</dbReference>
<dbReference type="PANTHER" id="PTHR24279:SF3">
    <property type="entry name" value="CHOLESTEROL SIDE-CHAIN CLEAVAGE ENZYME, MITOCHONDRIAL"/>
    <property type="match status" value="1"/>
</dbReference>
<dbReference type="PANTHER" id="PTHR24279">
    <property type="entry name" value="CYTOCHROME P450"/>
    <property type="match status" value="1"/>
</dbReference>
<dbReference type="Pfam" id="PF00067">
    <property type="entry name" value="p450"/>
    <property type="match status" value="1"/>
</dbReference>
<dbReference type="PRINTS" id="PR00463">
    <property type="entry name" value="EP450I"/>
</dbReference>
<dbReference type="PRINTS" id="PR00385">
    <property type="entry name" value="P450"/>
</dbReference>
<dbReference type="SUPFAM" id="SSF48264">
    <property type="entry name" value="Cytochrome P450"/>
    <property type="match status" value="1"/>
</dbReference>
<dbReference type="PROSITE" id="PS00086">
    <property type="entry name" value="CYTOCHROME_P450"/>
    <property type="match status" value="1"/>
</dbReference>
<evidence type="ECO:0000250" key="1">
    <source>
        <dbReference type="UniProtKB" id="P00189"/>
    </source>
</evidence>
<evidence type="ECO:0000250" key="2">
    <source>
        <dbReference type="UniProtKB" id="P05108"/>
    </source>
</evidence>
<evidence type="ECO:0000250" key="3">
    <source>
        <dbReference type="UniProtKB" id="P14137"/>
    </source>
</evidence>
<evidence type="ECO:0000269" key="4">
    <source>
    </source>
</evidence>
<evidence type="ECO:0000305" key="5"/>
<name>CP11A_ONCMY</name>
<sequence>MMVSWSVCRSSLALPACGLPSARHNSSMPVVRQALSPDNSSTVQNFSEIPGLWRNGLANLYSFWKLDGFRNIHRVMVHNFNTFGPIYREKIGYYDSVNIIKPEMPAILFKAEGHYPKRLTVEAWTSYRDYRNRKYGVLLKNGEDWRSNRVILNREVISPKVLGNFVPLLDEVGQDFVARVHKKIERSGQDKWTTDLSQELFKYALESVGSVLYGERLGLMLDYINPEAQHFIDCISLMFKTTSPMLYIPPAMLRRVGAKIWRDHVEAWDGIFNQADRCIQNIYRTMRQDTNTHGKYPGVLASLLMLDKLSIEDIKASVTELMAGGVDTTSITLLWTLYELARHPDLQEELRAEVAVARQSTQGDMLQMLKMIPLVKGALKETLRLHPVAVSLQRYITEEIVIQNYHIPCGTLVQLGLYAMGRDPDVFPRPEKYLPSRWLRTENQYFRSLGFGFGPRQCLGRRIAETEMQLFLIHMLENFRVDKQRQVEVHSTFELILLPEKPILLTLKPLKSGQ</sequence>
<comment type="function">
    <text evidence="2">Catalyzes the side-chain cleavage reaction of cholesterol to pregnenolone, the precursor of most steroid hormones.</text>
</comment>
<comment type="catalytic activity">
    <reaction evidence="2">
        <text>6 reduced [adrenodoxin] + cholesterol + 3 O2 + 6 H(+) = 4-methylpentanal + pregnenolone + 6 oxidized [adrenodoxin] + 4 H2O</text>
        <dbReference type="Rhea" id="RHEA:35739"/>
        <dbReference type="Rhea" id="RHEA-COMP:9998"/>
        <dbReference type="Rhea" id="RHEA-COMP:9999"/>
        <dbReference type="ChEBI" id="CHEBI:15377"/>
        <dbReference type="ChEBI" id="CHEBI:15378"/>
        <dbReference type="ChEBI" id="CHEBI:15379"/>
        <dbReference type="ChEBI" id="CHEBI:16113"/>
        <dbReference type="ChEBI" id="CHEBI:16581"/>
        <dbReference type="ChEBI" id="CHEBI:17998"/>
        <dbReference type="ChEBI" id="CHEBI:33737"/>
        <dbReference type="ChEBI" id="CHEBI:33738"/>
        <dbReference type="EC" id="1.14.15.6"/>
    </reaction>
</comment>
<comment type="cofactor">
    <cofactor evidence="2">
        <name>heme</name>
        <dbReference type="ChEBI" id="CHEBI:30413"/>
    </cofactor>
</comment>
<comment type="pathway">
    <text>Lipid metabolism; C21-steroid hormone metabolism.</text>
</comment>
<comment type="subcellular location">
    <subcellularLocation>
        <location evidence="3">Mitochondrion inner membrane</location>
        <topology evidence="5">Peripheral membrane protein</topology>
    </subcellularLocation>
    <text evidence="3">Localizes to the matrix side of the mitochondrion inner membrane.</text>
</comment>
<comment type="tissue specificity">
    <text evidence="4">In the ovary, not found in early vitellogenic follicles, barely detected in postvitellogenic follicles and abundant in post-ovulatory follicles.</text>
</comment>
<comment type="similarity">
    <text evidence="5">Belongs to the cytochrome P450 family.</text>
</comment>